<protein>
    <recommendedName>
        <fullName>Tubulin beta chain</fullName>
    </recommendedName>
    <alternativeName>
        <fullName>Beta-tubulin</fullName>
    </alternativeName>
</protein>
<dbReference type="EMBL" id="AY856373">
    <property type="protein sequence ID" value="AAX52521.1"/>
    <property type="molecule type" value="Genomic_DNA"/>
</dbReference>
<dbReference type="EMBL" id="AY856374">
    <property type="protein sequence ID" value="AAX52522.1"/>
    <property type="molecule type" value="Genomic_DNA"/>
</dbReference>
<dbReference type="GO" id="GO:0005737">
    <property type="term" value="C:cytoplasm"/>
    <property type="evidence" value="ECO:0007669"/>
    <property type="project" value="UniProtKB-KW"/>
</dbReference>
<dbReference type="GO" id="GO:0005874">
    <property type="term" value="C:microtubule"/>
    <property type="evidence" value="ECO:0007669"/>
    <property type="project" value="UniProtKB-KW"/>
</dbReference>
<dbReference type="GO" id="GO:0005525">
    <property type="term" value="F:GTP binding"/>
    <property type="evidence" value="ECO:0007669"/>
    <property type="project" value="UniProtKB-KW"/>
</dbReference>
<dbReference type="GO" id="GO:0003924">
    <property type="term" value="F:GTPase activity"/>
    <property type="evidence" value="ECO:0007669"/>
    <property type="project" value="InterPro"/>
</dbReference>
<dbReference type="GO" id="GO:0046872">
    <property type="term" value="F:metal ion binding"/>
    <property type="evidence" value="ECO:0007669"/>
    <property type="project" value="UniProtKB-KW"/>
</dbReference>
<dbReference type="GO" id="GO:0005200">
    <property type="term" value="F:structural constituent of cytoskeleton"/>
    <property type="evidence" value="ECO:0007669"/>
    <property type="project" value="InterPro"/>
</dbReference>
<dbReference type="GO" id="GO:0007017">
    <property type="term" value="P:microtubule-based process"/>
    <property type="evidence" value="ECO:0007669"/>
    <property type="project" value="InterPro"/>
</dbReference>
<dbReference type="CDD" id="cd02187">
    <property type="entry name" value="beta_tubulin"/>
    <property type="match status" value="1"/>
</dbReference>
<dbReference type="FunFam" id="1.10.287.600:FF:000003">
    <property type="entry name" value="Tubulin beta chain"/>
    <property type="match status" value="1"/>
</dbReference>
<dbReference type="FunFam" id="3.30.1330.20:FF:000002">
    <property type="entry name" value="Tubulin beta chain"/>
    <property type="match status" value="1"/>
</dbReference>
<dbReference type="FunFam" id="3.40.50.1440:FF:000009">
    <property type="entry name" value="Tubulin beta chain"/>
    <property type="match status" value="1"/>
</dbReference>
<dbReference type="Gene3D" id="1.10.287.600">
    <property type="entry name" value="Helix hairpin bin"/>
    <property type="match status" value="1"/>
</dbReference>
<dbReference type="Gene3D" id="3.30.1330.20">
    <property type="entry name" value="Tubulin/FtsZ, C-terminal domain"/>
    <property type="match status" value="1"/>
</dbReference>
<dbReference type="Gene3D" id="3.40.50.1440">
    <property type="entry name" value="Tubulin/FtsZ, GTPase domain"/>
    <property type="match status" value="1"/>
</dbReference>
<dbReference type="InterPro" id="IPR013838">
    <property type="entry name" value="Beta-tubulin_BS"/>
</dbReference>
<dbReference type="InterPro" id="IPR002453">
    <property type="entry name" value="Beta_tubulin"/>
</dbReference>
<dbReference type="InterPro" id="IPR008280">
    <property type="entry name" value="Tub_FtsZ_C"/>
</dbReference>
<dbReference type="InterPro" id="IPR000217">
    <property type="entry name" value="Tubulin"/>
</dbReference>
<dbReference type="InterPro" id="IPR037103">
    <property type="entry name" value="Tubulin/FtsZ-like_C"/>
</dbReference>
<dbReference type="InterPro" id="IPR018316">
    <property type="entry name" value="Tubulin/FtsZ_2-layer-sand-dom"/>
</dbReference>
<dbReference type="InterPro" id="IPR036525">
    <property type="entry name" value="Tubulin/FtsZ_GTPase_sf"/>
</dbReference>
<dbReference type="InterPro" id="IPR023123">
    <property type="entry name" value="Tubulin_C"/>
</dbReference>
<dbReference type="InterPro" id="IPR017975">
    <property type="entry name" value="Tubulin_CS"/>
</dbReference>
<dbReference type="InterPro" id="IPR003008">
    <property type="entry name" value="Tubulin_FtsZ_GTPase"/>
</dbReference>
<dbReference type="PANTHER" id="PTHR11588">
    <property type="entry name" value="TUBULIN"/>
    <property type="match status" value="1"/>
</dbReference>
<dbReference type="Pfam" id="PF00091">
    <property type="entry name" value="Tubulin"/>
    <property type="match status" value="1"/>
</dbReference>
<dbReference type="Pfam" id="PF03953">
    <property type="entry name" value="Tubulin_C"/>
    <property type="match status" value="1"/>
</dbReference>
<dbReference type="PRINTS" id="PR01163">
    <property type="entry name" value="BETATUBULIN"/>
</dbReference>
<dbReference type="PRINTS" id="PR01161">
    <property type="entry name" value="TUBULIN"/>
</dbReference>
<dbReference type="SMART" id="SM00864">
    <property type="entry name" value="Tubulin"/>
    <property type="match status" value="1"/>
</dbReference>
<dbReference type="SMART" id="SM00865">
    <property type="entry name" value="Tubulin_C"/>
    <property type="match status" value="1"/>
</dbReference>
<dbReference type="SUPFAM" id="SSF55307">
    <property type="entry name" value="Tubulin C-terminal domain-like"/>
    <property type="match status" value="1"/>
</dbReference>
<dbReference type="SUPFAM" id="SSF52490">
    <property type="entry name" value="Tubulin nucleotide-binding domain-like"/>
    <property type="match status" value="1"/>
</dbReference>
<dbReference type="PROSITE" id="PS00227">
    <property type="entry name" value="TUBULIN"/>
    <property type="match status" value="1"/>
</dbReference>
<dbReference type="PROSITE" id="PS00228">
    <property type="entry name" value="TUBULIN_B_AUTOREG"/>
    <property type="match status" value="1"/>
</dbReference>
<comment type="function">
    <text>Tubulin is the major constituent of microtubules, a cylinder consisting of laterally associated linear protofilaments composed of alpha- and beta-tubulin heterodimers. Microtubules grow by the addition of GTP-tubulin dimers to the microtubule end, where a stabilizing cap forms. Below the cap, tubulin dimers are in GDP-bound state, owing to GTPase activity of alpha-tubulin.</text>
</comment>
<comment type="cofactor">
    <cofactor evidence="1">
        <name>Mg(2+)</name>
        <dbReference type="ChEBI" id="CHEBI:18420"/>
    </cofactor>
</comment>
<comment type="subunit">
    <text>Dimer of alpha and beta chains. A typical microtubule is a hollow water-filled tube with an outer diameter of 25 nm and an inner diameter of 15 nM. Alpha-beta heterodimers associate head-to-tail to form protofilaments running lengthwise along the microtubule wall with the beta-tubulin subunit facing the microtubule plus end conferring a structural polarity. Microtubules usually have 13 protofilaments but different protofilament numbers can be found in some organisms and specialized cells.</text>
</comment>
<comment type="subcellular location">
    <subcellularLocation>
        <location>Cytoplasm</location>
        <location>Cytoskeleton</location>
    </subcellularLocation>
</comment>
<comment type="similarity">
    <text evidence="4">Belongs to the tubulin family.</text>
</comment>
<accession>Q3KVN1</accession>
<accession>Q3KVN2</accession>
<proteinExistence type="inferred from homology"/>
<evidence type="ECO:0000250" key="1">
    <source>
        <dbReference type="UniProtKB" id="P68363"/>
    </source>
</evidence>
<evidence type="ECO:0000250" key="2">
    <source>
        <dbReference type="UniProtKB" id="Q13509"/>
    </source>
</evidence>
<evidence type="ECO:0000256" key="3">
    <source>
        <dbReference type="SAM" id="MobiDB-lite"/>
    </source>
</evidence>
<evidence type="ECO:0000305" key="4"/>
<sequence>MREIVHLQTGQCGNQIGAAFWQTISGEHGLDGSGVYNGTSDLQLERMNVYFNEASGNKYVPRAVLVDLEPGTMDAVRAGPXGQLFRPDNFVFGQSGAGNNWAKGHYTEGAELVDQVLDVVRREAEGCDCLQGFQITHSLGGGTGAGMGTLLISKIREEFPDRMMATFSVMPSPKVSDTVVEPYNATLSVHQLVENSDATFCIDNEALYDICMRTLKLNNPSYGDLNHLVSAVMSGVTTCLRFPGQLNSDLRKLAVNMVPFPRLHFFMVGFAPLTSRGAHSFRAVTVPELTQQIFDPKNMMAASDFRNGRYLTCSAIYRGKVSMKEVEDQIRNVQNKNTAYFVEWIPNNVQTALCSIPPRGLKMSSTFVGNSTSIQELFKRVGDQFTAMFRRKAFLHWYTGEGMDEMEFTEAESNMNDLVSEYQQYQEASVSEGEEEYDEEAPLEGEE</sequence>
<reference key="1">
    <citation type="submission" date="2004-12" db="EMBL/GenBank/DDBJ databases">
        <title>Isolation of beta-tubulin gene fragments from benzimadizole-sensitive and tolerant Cercospora beticola.</title>
        <authorList>
            <person name="Davidson R.M."/>
            <person name="Hanson L.E."/>
            <person name="Franc G.D."/>
            <person name="Panella L."/>
            <person name="Spence R.M."/>
        </authorList>
    </citation>
    <scope>NUCLEOTIDE SEQUENCE [GENOMIC DNA]</scope>
    <source>
        <strain>AD-762</strain>
        <strain>C-3</strain>
    </source>
</reference>
<name>TBB_CERBT</name>
<organism>
    <name type="scientific">Cercospora beticola</name>
    <name type="common">Sugarbeet leaf spot fungus</name>
    <dbReference type="NCBI Taxonomy" id="122368"/>
    <lineage>
        <taxon>Eukaryota</taxon>
        <taxon>Fungi</taxon>
        <taxon>Dikarya</taxon>
        <taxon>Ascomycota</taxon>
        <taxon>Pezizomycotina</taxon>
        <taxon>Dothideomycetes</taxon>
        <taxon>Dothideomycetidae</taxon>
        <taxon>Mycosphaerellales</taxon>
        <taxon>Mycosphaerellaceae</taxon>
        <taxon>Cercospora</taxon>
    </lineage>
</organism>
<gene>
    <name type="primary">TUB1</name>
</gene>
<feature type="chain" id="PRO_0000048399" description="Tubulin beta chain">
    <location>
        <begin position="1"/>
        <end position="447"/>
    </location>
</feature>
<feature type="region of interest" description="Disordered" evidence="3">
    <location>
        <begin position="424"/>
        <end position="447"/>
    </location>
</feature>
<feature type="compositionally biased region" description="Acidic residues" evidence="3">
    <location>
        <begin position="432"/>
        <end position="447"/>
    </location>
</feature>
<feature type="binding site" evidence="2">
    <location>
        <position position="11"/>
    </location>
    <ligand>
        <name>GTP</name>
        <dbReference type="ChEBI" id="CHEBI:37565"/>
    </ligand>
</feature>
<feature type="binding site" evidence="1">
    <location>
        <position position="69"/>
    </location>
    <ligand>
        <name>GTP</name>
        <dbReference type="ChEBI" id="CHEBI:37565"/>
    </ligand>
</feature>
<feature type="binding site" evidence="1">
    <location>
        <position position="69"/>
    </location>
    <ligand>
        <name>Mg(2+)</name>
        <dbReference type="ChEBI" id="CHEBI:18420"/>
    </ligand>
</feature>
<feature type="binding site" evidence="2">
    <location>
        <position position="138"/>
    </location>
    <ligand>
        <name>GTP</name>
        <dbReference type="ChEBI" id="CHEBI:37565"/>
    </ligand>
</feature>
<feature type="binding site" evidence="2">
    <location>
        <position position="142"/>
    </location>
    <ligand>
        <name>GTP</name>
        <dbReference type="ChEBI" id="CHEBI:37565"/>
    </ligand>
</feature>
<feature type="binding site" evidence="2">
    <location>
        <position position="143"/>
    </location>
    <ligand>
        <name>GTP</name>
        <dbReference type="ChEBI" id="CHEBI:37565"/>
    </ligand>
</feature>
<feature type="binding site" evidence="2">
    <location>
        <position position="144"/>
    </location>
    <ligand>
        <name>GTP</name>
        <dbReference type="ChEBI" id="CHEBI:37565"/>
    </ligand>
</feature>
<feature type="binding site" evidence="2">
    <location>
        <position position="204"/>
    </location>
    <ligand>
        <name>GTP</name>
        <dbReference type="ChEBI" id="CHEBI:37565"/>
    </ligand>
</feature>
<feature type="binding site" evidence="2">
    <location>
        <position position="226"/>
    </location>
    <ligand>
        <name>GTP</name>
        <dbReference type="ChEBI" id="CHEBI:37565"/>
    </ligand>
</feature>
<feature type="sequence variant" description="In strain: C-3.">
    <original>A</original>
    <variation>E</variation>
    <location>
        <position position="198"/>
    </location>
</feature>
<keyword id="KW-0963">Cytoplasm</keyword>
<keyword id="KW-0206">Cytoskeleton</keyword>
<keyword id="KW-0342">GTP-binding</keyword>
<keyword id="KW-0460">Magnesium</keyword>
<keyword id="KW-0479">Metal-binding</keyword>
<keyword id="KW-0493">Microtubule</keyword>
<keyword id="KW-0547">Nucleotide-binding</keyword>